<keyword id="KW-0002">3D-structure</keyword>
<keyword id="KW-0929">Antimicrobial</keyword>
<keyword id="KW-0147">Chitin-binding</keyword>
<keyword id="KW-0903">Direct protein sequencing</keyword>
<keyword id="KW-1015">Disulfide bond</keyword>
<keyword id="KW-0295">Fungicide</keyword>
<keyword id="KW-0732">Signal</keyword>
<feature type="signal peptide" evidence="2">
    <location>
        <begin position="1"/>
        <end position="20"/>
    </location>
</feature>
<feature type="peptide" id="PRO_0000449242" description="Morintide mO1" evidence="2">
    <location>
        <begin position="21"/>
        <end position="63"/>
    </location>
</feature>
<feature type="propeptide" id="PRO_0000449243" evidence="2">
    <location>
        <begin position="64"/>
        <end position="79"/>
    </location>
</feature>
<feature type="domain" description="Chitin-binding type-1" evidence="1">
    <location>
        <begin position="21"/>
        <end position="63"/>
    </location>
</feature>
<feature type="disulfide bond" evidence="1 2 6">
    <location>
        <begin position="23"/>
        <end position="38"/>
    </location>
</feature>
<feature type="disulfide bond" evidence="1 2 6">
    <location>
        <begin position="32"/>
        <end position="44"/>
    </location>
</feature>
<feature type="disulfide bond" evidence="1 2 6">
    <location>
        <begin position="37"/>
        <end position="51"/>
    </location>
</feature>
<feature type="disulfide bond" evidence="1 2 6">
    <location>
        <begin position="57"/>
        <end position="61"/>
    </location>
</feature>
<feature type="turn" evidence="7">
    <location>
        <begin position="25"/>
        <end position="28"/>
    </location>
</feature>
<feature type="strand" evidence="7">
    <location>
        <begin position="34"/>
        <end position="38"/>
    </location>
</feature>
<feature type="strand" evidence="7">
    <location>
        <begin position="44"/>
        <end position="47"/>
    </location>
</feature>
<feature type="turn" evidence="7">
    <location>
        <begin position="48"/>
        <end position="50"/>
    </location>
</feature>
<feature type="strand" evidence="7">
    <location>
        <begin position="53"/>
        <end position="55"/>
    </location>
</feature>
<name>MO1_MOROL</name>
<sequence>MAKLSFLSLFLLCLVATATAQNCGRQAGNRACANQLCCSQYGFCGSTSEYCSRANGCQSNCRGGGGADGAGGEAGGGGP</sequence>
<organism evidence="3">
    <name type="scientific">Moringa oleifera</name>
    <name type="common">Horseradish tree</name>
    <name type="synonym">Moringa pterygosperma</name>
    <dbReference type="NCBI Taxonomy" id="3735"/>
    <lineage>
        <taxon>Eukaryota</taxon>
        <taxon>Viridiplantae</taxon>
        <taxon>Streptophyta</taxon>
        <taxon>Embryophyta</taxon>
        <taxon>Tracheophyta</taxon>
        <taxon>Spermatophyta</taxon>
        <taxon>Magnoliopsida</taxon>
        <taxon>eudicotyledons</taxon>
        <taxon>Gunneridae</taxon>
        <taxon>Pentapetalae</taxon>
        <taxon>rosids</taxon>
        <taxon>malvids</taxon>
        <taxon>Brassicales</taxon>
        <taxon>Moringaceae</taxon>
        <taxon>Moringa</taxon>
    </lineage>
</organism>
<protein>
    <recommendedName>
        <fullName evidence="3">Morintide mO1</fullName>
    </recommendedName>
    <alternativeName>
        <fullName evidence="4">8C-hevein-like protein</fullName>
    </alternativeName>
</protein>
<proteinExistence type="evidence at protein level"/>
<dbReference type="EMBL" id="KY436355">
    <property type="protein sequence ID" value="AQR58371.1"/>
    <property type="molecule type" value="mRNA"/>
</dbReference>
<dbReference type="PDB" id="5WUZ">
    <property type="method" value="NMR"/>
    <property type="chains" value="A=21-63"/>
</dbReference>
<dbReference type="PDBsum" id="5WUZ"/>
<dbReference type="SMR" id="A0A1S6EK91"/>
<dbReference type="GO" id="GO:0008061">
    <property type="term" value="F:chitin binding"/>
    <property type="evidence" value="ECO:0007669"/>
    <property type="project" value="UniProtKB-KW"/>
</dbReference>
<dbReference type="GO" id="GO:0050832">
    <property type="term" value="P:defense response to fungus"/>
    <property type="evidence" value="ECO:0007669"/>
    <property type="project" value="UniProtKB-KW"/>
</dbReference>
<dbReference type="GO" id="GO:0031640">
    <property type="term" value="P:killing of cells of another organism"/>
    <property type="evidence" value="ECO:0007669"/>
    <property type="project" value="UniProtKB-KW"/>
</dbReference>
<dbReference type="CDD" id="cd00035">
    <property type="entry name" value="ChtBD1"/>
    <property type="match status" value="1"/>
</dbReference>
<dbReference type="FunFam" id="3.30.60.10:FF:000001">
    <property type="entry name" value="Basic endochitinase"/>
    <property type="match status" value="1"/>
</dbReference>
<dbReference type="Gene3D" id="3.30.60.10">
    <property type="entry name" value="Endochitinase-like"/>
    <property type="match status" value="1"/>
</dbReference>
<dbReference type="InterPro" id="IPR001002">
    <property type="entry name" value="Chitin-bd_1"/>
</dbReference>
<dbReference type="InterPro" id="IPR018371">
    <property type="entry name" value="Chitin-binding_1_CS"/>
</dbReference>
<dbReference type="InterPro" id="IPR036861">
    <property type="entry name" value="Endochitinase-like_sf"/>
</dbReference>
<dbReference type="Pfam" id="PF00187">
    <property type="entry name" value="Chitin_bind_1"/>
    <property type="match status" value="1"/>
</dbReference>
<dbReference type="PRINTS" id="PR00451">
    <property type="entry name" value="CHITINBINDNG"/>
</dbReference>
<dbReference type="SMART" id="SM00270">
    <property type="entry name" value="ChtBD1"/>
    <property type="match status" value="1"/>
</dbReference>
<dbReference type="SUPFAM" id="SSF57016">
    <property type="entry name" value="Plant lectins/antimicrobial peptides"/>
    <property type="match status" value="1"/>
</dbReference>
<dbReference type="PROSITE" id="PS00026">
    <property type="entry name" value="CHIT_BIND_I_1"/>
    <property type="match status" value="1"/>
</dbReference>
<dbReference type="PROSITE" id="PS50941">
    <property type="entry name" value="CHIT_BIND_I_2"/>
    <property type="match status" value="1"/>
</dbReference>
<comment type="function">
    <text evidence="2">Chitin-binding protein which functions in defense against chitin-containing fungal pathogens. Inhibits the growth of budding hyphae in A.alternata and A.brassiciola.</text>
</comment>
<comment type="biophysicochemical properties">
    <temperatureDependence>
        <text evidence="2">Thermostable. Loses 5% of activity at 100 degrees Celsius after 1 hour incubation.</text>
    </temperatureDependence>
</comment>
<comment type="tissue specificity">
    <text evidence="2">Leaves (at protein level).</text>
</comment>
<comment type="mass spectrometry"/>
<accession>A0A1S6EK91</accession>
<accession>A0A1S4NYG2</accession>
<evidence type="ECO:0000255" key="1">
    <source>
        <dbReference type="PROSITE-ProRule" id="PRU00261"/>
    </source>
</evidence>
<evidence type="ECO:0000269" key="2">
    <source>
    </source>
</evidence>
<evidence type="ECO:0000303" key="3">
    <source>
    </source>
</evidence>
<evidence type="ECO:0000312" key="4">
    <source>
        <dbReference type="EMBL" id="AQR58371.1"/>
    </source>
</evidence>
<evidence type="ECO:0000312" key="5">
    <source>
        <dbReference type="PDB" id="5WUZ"/>
    </source>
</evidence>
<evidence type="ECO:0007744" key="6">
    <source>
        <dbReference type="PDB" id="5WUZ"/>
    </source>
</evidence>
<evidence type="ECO:0007829" key="7">
    <source>
        <dbReference type="PDB" id="5WUZ"/>
    </source>
</evidence>
<reference evidence="4 5 6" key="1">
    <citation type="journal article" date="2017" name="BMC Plant Biol.">
        <title>Morintides: cargo-free chitin-binding peptides from Moringa oleifera.</title>
        <authorList>
            <person name="Kini S.G."/>
            <person name="Wong K.H."/>
            <person name="Tan W.L."/>
            <person name="Xiao T."/>
            <person name="Tam J.P."/>
        </authorList>
    </citation>
    <scope>NUCLEOTIDE SEQUENCE [MRNA]</scope>
    <scope>PROTEIN SEQUENCE OF 21-63</scope>
    <scope>STRUCTURE BY NMR OF 21-63</scope>
    <scope>FUNCTION</scope>
    <scope>BIOPHYSICOCHEMICAL PROPERTIES</scope>
    <scope>TISSUE SPECIFICITY</scope>
    <scope>MASS SPECTROMETRY</scope>
    <scope>DISULFIDE BONDS</scope>
    <source>
        <tissue evidence="3">Leaf</tissue>
    </source>
</reference>